<evidence type="ECO:0000255" key="1">
    <source>
        <dbReference type="HAMAP-Rule" id="MF_03151"/>
    </source>
</evidence>
<sequence length="176" mass="19683">MLRIARVSHNAVKMASSRGIHFSSDGFIKMKDQKHILKVMNSPENQWSTDELLSHSDHSSDEITSETLQKVSKKLAPIFKSAALPMPDSDETMFSLIKTLRTQVNLVSHIHDIDVSGVAPLTCLTPIKDFTYEQLTAEDSGEPGPEVLWDALSCAEKKDGRFFVVSRDIKQEEPTQ</sequence>
<reference key="1">
    <citation type="journal article" date="2004" name="Nature">
        <title>Genome evolution in yeasts.</title>
        <authorList>
            <person name="Dujon B."/>
            <person name="Sherman D."/>
            <person name="Fischer G."/>
            <person name="Durrens P."/>
            <person name="Casaregola S."/>
            <person name="Lafontaine I."/>
            <person name="de Montigny J."/>
            <person name="Marck C."/>
            <person name="Neuveglise C."/>
            <person name="Talla E."/>
            <person name="Goffard N."/>
            <person name="Frangeul L."/>
            <person name="Aigle M."/>
            <person name="Anthouard V."/>
            <person name="Babour A."/>
            <person name="Barbe V."/>
            <person name="Barnay S."/>
            <person name="Blanchin S."/>
            <person name="Beckerich J.-M."/>
            <person name="Beyne E."/>
            <person name="Bleykasten C."/>
            <person name="Boisrame A."/>
            <person name="Boyer J."/>
            <person name="Cattolico L."/>
            <person name="Confanioleri F."/>
            <person name="de Daruvar A."/>
            <person name="Despons L."/>
            <person name="Fabre E."/>
            <person name="Fairhead C."/>
            <person name="Ferry-Dumazet H."/>
            <person name="Groppi A."/>
            <person name="Hantraye F."/>
            <person name="Hennequin C."/>
            <person name="Jauniaux N."/>
            <person name="Joyet P."/>
            <person name="Kachouri R."/>
            <person name="Kerrest A."/>
            <person name="Koszul R."/>
            <person name="Lemaire M."/>
            <person name="Lesur I."/>
            <person name="Ma L."/>
            <person name="Muller H."/>
            <person name="Nicaud J.-M."/>
            <person name="Nikolski M."/>
            <person name="Oztas S."/>
            <person name="Ozier-Kalogeropoulos O."/>
            <person name="Pellenz S."/>
            <person name="Potier S."/>
            <person name="Richard G.-F."/>
            <person name="Straub M.-L."/>
            <person name="Suleau A."/>
            <person name="Swennen D."/>
            <person name="Tekaia F."/>
            <person name="Wesolowski-Louvel M."/>
            <person name="Westhof E."/>
            <person name="Wirth B."/>
            <person name="Zeniou-Meyer M."/>
            <person name="Zivanovic Y."/>
            <person name="Bolotin-Fukuhara M."/>
            <person name="Thierry A."/>
            <person name="Bouchier C."/>
            <person name="Caudron B."/>
            <person name="Scarpelli C."/>
            <person name="Gaillardin C."/>
            <person name="Weissenbach J."/>
            <person name="Wincker P."/>
            <person name="Souciet J.-L."/>
        </authorList>
    </citation>
    <scope>NUCLEOTIDE SEQUENCE [LARGE SCALE GENOMIC DNA]</scope>
    <source>
        <strain>CLIB 122 / E 150</strain>
    </source>
</reference>
<comment type="function">
    <text evidence="1">Allows the formation of correctly charged Gln-tRNA(Gln) through the transamidation of misacylated Glu-tRNA(Gln) in the mitochondria. The reaction takes place in the presence of glutamine and ATP through an activated gamma-phospho-Glu-tRNA(Gln). Required for proper protein synthesis within the mitochondrion.</text>
</comment>
<comment type="catalytic activity">
    <reaction evidence="1">
        <text>L-glutamyl-tRNA(Gln) + L-glutamine + ATP + H2O = L-glutaminyl-tRNA(Gln) + L-glutamate + ADP + phosphate + H(+)</text>
        <dbReference type="Rhea" id="RHEA:17521"/>
        <dbReference type="Rhea" id="RHEA-COMP:9681"/>
        <dbReference type="Rhea" id="RHEA-COMP:9684"/>
        <dbReference type="ChEBI" id="CHEBI:15377"/>
        <dbReference type="ChEBI" id="CHEBI:15378"/>
        <dbReference type="ChEBI" id="CHEBI:29985"/>
        <dbReference type="ChEBI" id="CHEBI:30616"/>
        <dbReference type="ChEBI" id="CHEBI:43474"/>
        <dbReference type="ChEBI" id="CHEBI:58359"/>
        <dbReference type="ChEBI" id="CHEBI:78520"/>
        <dbReference type="ChEBI" id="CHEBI:78521"/>
        <dbReference type="ChEBI" id="CHEBI:456216"/>
    </reaction>
</comment>
<comment type="subunit">
    <text evidence="1">Subunit of the heterotrimeric GatFAB amidotransferase (AdT) complex, composed of A, B and F subunits.</text>
</comment>
<comment type="subcellular location">
    <subcellularLocation>
        <location evidence="1">Mitochondrion inner membrane</location>
        <topology evidence="1">Peripheral membrane protein</topology>
        <orientation evidence="1">Matrix side</orientation>
    </subcellularLocation>
</comment>
<comment type="miscellaneous">
    <text evidence="1">This protein may be expected to contain an N-terminal transit peptide but none has been predicted.</text>
</comment>
<comment type="similarity">
    <text evidence="1">Belongs to the GatF family.</text>
</comment>
<dbReference type="EC" id="6.3.5.-" evidence="1"/>
<dbReference type="EMBL" id="CR382128">
    <property type="protein sequence ID" value="CAG83517.1"/>
    <property type="molecule type" value="Genomic_DNA"/>
</dbReference>
<dbReference type="RefSeq" id="XP_501264.1">
    <property type="nucleotide sequence ID" value="XM_501264.1"/>
</dbReference>
<dbReference type="STRING" id="284591.Q6CDJ8"/>
<dbReference type="EnsemblFungi" id="CAG83517">
    <property type="protein sequence ID" value="CAG83517"/>
    <property type="gene ID" value="YALI0_B23386g"/>
</dbReference>
<dbReference type="KEGG" id="yli:2906853"/>
<dbReference type="VEuPathDB" id="FungiDB:YALI0_B23386g"/>
<dbReference type="HOGENOM" id="CLU_1526368_0_0_1"/>
<dbReference type="InParanoid" id="Q6CDJ8"/>
<dbReference type="OrthoDB" id="110516at4891"/>
<dbReference type="Proteomes" id="UP000001300">
    <property type="component" value="Chromosome B"/>
</dbReference>
<dbReference type="GO" id="GO:0030956">
    <property type="term" value="C:glutamyl-tRNA(Gln) amidotransferase complex"/>
    <property type="evidence" value="ECO:0007669"/>
    <property type="project" value="UniProtKB-UniRule"/>
</dbReference>
<dbReference type="GO" id="GO:0005743">
    <property type="term" value="C:mitochondrial inner membrane"/>
    <property type="evidence" value="ECO:0007669"/>
    <property type="project" value="UniProtKB-SubCell"/>
</dbReference>
<dbReference type="GO" id="GO:0005524">
    <property type="term" value="F:ATP binding"/>
    <property type="evidence" value="ECO:0007669"/>
    <property type="project" value="UniProtKB-KW"/>
</dbReference>
<dbReference type="GO" id="GO:0050567">
    <property type="term" value="F:glutaminyl-tRNA synthase (glutamine-hydrolyzing) activity"/>
    <property type="evidence" value="ECO:0007669"/>
    <property type="project" value="UniProtKB-UniRule"/>
</dbReference>
<dbReference type="GO" id="GO:0070681">
    <property type="term" value="P:glutaminyl-tRNAGln biosynthesis via transamidation"/>
    <property type="evidence" value="ECO:0007669"/>
    <property type="project" value="UniProtKB-UniRule"/>
</dbReference>
<dbReference type="GO" id="GO:0032543">
    <property type="term" value="P:mitochondrial translation"/>
    <property type="evidence" value="ECO:0007669"/>
    <property type="project" value="UniProtKB-UniRule"/>
</dbReference>
<dbReference type="CDD" id="cd21422">
    <property type="entry name" value="GatF"/>
    <property type="match status" value="1"/>
</dbReference>
<dbReference type="HAMAP" id="MF_03151">
    <property type="entry name" value="GatF"/>
    <property type="match status" value="1"/>
</dbReference>
<dbReference type="InterPro" id="IPR027499">
    <property type="entry name" value="GatF"/>
</dbReference>
<dbReference type="Pfam" id="PF20977">
    <property type="entry name" value="GatF"/>
    <property type="match status" value="1"/>
</dbReference>
<gene>
    <name evidence="1" type="primary">GTF1</name>
    <name type="ordered locus">YALI0B23386g</name>
</gene>
<organism>
    <name type="scientific">Yarrowia lipolytica (strain CLIB 122 / E 150)</name>
    <name type="common">Yeast</name>
    <name type="synonym">Candida lipolytica</name>
    <dbReference type="NCBI Taxonomy" id="284591"/>
    <lineage>
        <taxon>Eukaryota</taxon>
        <taxon>Fungi</taxon>
        <taxon>Dikarya</taxon>
        <taxon>Ascomycota</taxon>
        <taxon>Saccharomycotina</taxon>
        <taxon>Dipodascomycetes</taxon>
        <taxon>Dipodascales</taxon>
        <taxon>Dipodascales incertae sedis</taxon>
        <taxon>Yarrowia</taxon>
    </lineage>
</organism>
<proteinExistence type="inferred from homology"/>
<keyword id="KW-0067">ATP-binding</keyword>
<keyword id="KW-0436">Ligase</keyword>
<keyword id="KW-0472">Membrane</keyword>
<keyword id="KW-0496">Mitochondrion</keyword>
<keyword id="KW-0999">Mitochondrion inner membrane</keyword>
<keyword id="KW-0547">Nucleotide-binding</keyword>
<keyword id="KW-0648">Protein biosynthesis</keyword>
<keyword id="KW-1185">Reference proteome</keyword>
<protein>
    <recommendedName>
        <fullName evidence="1">Glutamyl-tRNA(Gln) amidotransferase subunit F, mitochondrial</fullName>
        <shortName evidence="1">Glu-AdT subunit F</shortName>
        <ecNumber evidence="1">6.3.5.-</ecNumber>
    </recommendedName>
</protein>
<accession>Q6CDJ8</accession>
<feature type="chain" id="PRO_0000413408" description="Glutamyl-tRNA(Gln) amidotransferase subunit F, mitochondrial">
    <location>
        <begin position="1"/>
        <end position="176"/>
    </location>
</feature>
<name>GATF_YARLI</name>